<evidence type="ECO:0000250" key="1"/>
<evidence type="ECO:0000250" key="2">
    <source>
        <dbReference type="UniProtKB" id="Q93VR3"/>
    </source>
</evidence>
<evidence type="ECO:0000269" key="3">
    <source>
    </source>
</evidence>
<evidence type="ECO:0000305" key="4"/>
<evidence type="ECO:0000312" key="5">
    <source>
        <dbReference type="EMBL" id="ABA94522.1"/>
    </source>
</evidence>
<evidence type="ECO:0000312" key="6">
    <source>
        <dbReference type="EMBL" id="BAF28546.1"/>
    </source>
</evidence>
<evidence type="ECO:0000312" key="7">
    <source>
        <dbReference type="EMBL" id="EAZ18955.1"/>
    </source>
</evidence>
<protein>
    <recommendedName>
        <fullName>GDP-mannose 3,5-epimerase 2</fullName>
        <shortName>GDP-Man 3,5-epimerase 2</shortName>
        <ecNumber evidence="2">5.1.3.18</ecNumber>
    </recommendedName>
</protein>
<keyword id="KW-0060">Ascorbate biosynthesis</keyword>
<keyword id="KW-0413">Isomerase</keyword>
<keyword id="KW-0520">NAD</keyword>
<keyword id="KW-1185">Reference proteome</keyword>
<comment type="function">
    <text evidence="2">Catalyzes a reversible epimerization of GDP-D-mannose that precedes the committed step in the biosynthesis of vitamin C (L-ascorbate), resulting in the hydrolysis of the highly energetic glycosyl-pyrophosphoryl linkage. Able to catalyze 2 distinct epimerization reactions and can release both GDP-L-galactose and GDP-L-gulose from GDP-mannose.</text>
</comment>
<comment type="catalytic activity">
    <reaction evidence="2">
        <text>GDP-alpha-D-mannose = GDP-beta-L-gulose</text>
        <dbReference type="Rhea" id="RHEA:63800"/>
        <dbReference type="ChEBI" id="CHEBI:57527"/>
        <dbReference type="ChEBI" id="CHEBI:149550"/>
        <dbReference type="EC" id="5.1.3.18"/>
    </reaction>
</comment>
<comment type="catalytic activity">
    <reaction evidence="2">
        <text>GDP-beta-L-gulose = GDP-beta-L-galactose</text>
        <dbReference type="Rhea" id="RHEA:63804"/>
        <dbReference type="ChEBI" id="CHEBI:61454"/>
        <dbReference type="ChEBI" id="CHEBI:149550"/>
        <dbReference type="EC" id="5.1.3.18"/>
    </reaction>
</comment>
<comment type="cofactor">
    <cofactor evidence="2">
        <name>NAD(+)</name>
        <dbReference type="ChEBI" id="CHEBI:57540"/>
    </cofactor>
</comment>
<comment type="pathway">
    <text evidence="3">Cofactor biosynthesis; L-ascorbate biosynthesis via GDP-alpha-D-mannose pathway; L-ascorbate from GDP-alpha-D-mannose: step 1/5.</text>
</comment>
<comment type="similarity">
    <text evidence="4">Belongs to the NAD(P)-dependent epimerase/dehydratase family.</text>
</comment>
<comment type="sequence caution" evidence="4">
    <conflict type="erroneous gene model prediction">
        <sequence resource="EMBL-CDS" id="ABA94523"/>
    </conflict>
</comment>
<comment type="sequence caution" evidence="4">
    <conflict type="erroneous gene model prediction">
        <sequence resource="EMBL-CDS" id="ABA94524"/>
    </conflict>
</comment>
<comment type="sequence caution" evidence="4">
    <conflict type="erroneous termination">
        <sequence resource="EMBL" id="AK102348"/>
    </conflict>
    <text>Truncated C-terminus.</text>
</comment>
<feature type="chain" id="PRO_0000233698" description="GDP-mannose 3,5-epimerase 2">
    <location>
        <begin position="1"/>
        <end position="371"/>
    </location>
</feature>
<feature type="active site" description="Proton acceptor" evidence="1">
    <location>
        <position position="168"/>
    </location>
</feature>
<feature type="binding site" evidence="1">
    <location>
        <begin position="29"/>
        <end position="55"/>
    </location>
    <ligand>
        <name>NAD(+)</name>
        <dbReference type="ChEBI" id="CHEBI:57540"/>
    </ligand>
</feature>
<feature type="binding site" evidence="1">
    <location>
        <position position="53"/>
    </location>
    <ligand>
        <name>NAD(+)</name>
        <dbReference type="ChEBI" id="CHEBI:57540"/>
    </ligand>
</feature>
<feature type="binding site" evidence="1">
    <location>
        <position position="73"/>
    </location>
    <ligand>
        <name>NAD(+)</name>
        <dbReference type="ChEBI" id="CHEBI:57540"/>
    </ligand>
</feature>
<feature type="binding site" evidence="1">
    <location>
        <position position="98"/>
    </location>
    <ligand>
        <name>substrate</name>
    </ligand>
</feature>
<feature type="binding site" evidence="1">
    <location>
        <begin position="138"/>
        <end position="140"/>
    </location>
    <ligand>
        <name>substrate</name>
    </ligand>
</feature>
<feature type="binding site" evidence="1">
    <location>
        <position position="168"/>
    </location>
    <ligand>
        <name>NAD(+)</name>
        <dbReference type="ChEBI" id="CHEBI:57540"/>
    </ligand>
</feature>
<feature type="binding site" evidence="1">
    <location>
        <position position="172"/>
    </location>
    <ligand>
        <name>NAD(+)</name>
        <dbReference type="ChEBI" id="CHEBI:57540"/>
    </ligand>
</feature>
<feature type="binding site" evidence="1">
    <location>
        <position position="197"/>
    </location>
    <ligand>
        <name>substrate</name>
    </ligand>
</feature>
<feature type="binding site" evidence="1">
    <location>
        <begin position="210"/>
        <end position="212"/>
    </location>
    <ligand>
        <name>substrate</name>
    </ligand>
</feature>
<feature type="binding site" evidence="1">
    <location>
        <position position="219"/>
    </location>
    <ligand>
        <name>substrate</name>
    </ligand>
</feature>
<feature type="binding site" evidence="1">
    <location>
        <begin position="235"/>
        <end position="237"/>
    </location>
    <ligand>
        <name>substrate</name>
    </ligand>
</feature>
<feature type="binding site" evidence="1">
    <location>
        <position position="300"/>
    </location>
    <ligand>
        <name>substrate</name>
    </ligand>
</feature>
<feature type="binding site" evidence="1">
    <location>
        <position position="350"/>
    </location>
    <ligand>
        <name>substrate</name>
    </ligand>
</feature>
<gene>
    <name type="primary">GME-2</name>
    <name evidence="6" type="ordered locus">Os11g0591100</name>
    <name evidence="5" type="ordered locus">LOC_Os11g37890</name>
    <name evidence="7" type="ORF">OsJ_34492</name>
</gene>
<proteinExistence type="evidence at transcript level"/>
<reference key="1">
    <citation type="journal article" date="2005" name="BMC Biol.">
        <title>The sequence of rice chromosomes 11 and 12, rich in disease resistance genes and recent gene duplications.</title>
        <authorList>
            <consortium name="The rice chromosomes 11 and 12 sequencing consortia"/>
        </authorList>
    </citation>
    <scope>NUCLEOTIDE SEQUENCE [LARGE SCALE GENOMIC DNA]</scope>
    <source>
        <strain>cv. Nipponbare</strain>
    </source>
</reference>
<reference key="2">
    <citation type="journal article" date="2005" name="Nature">
        <title>The map-based sequence of the rice genome.</title>
        <authorList>
            <consortium name="International rice genome sequencing project (IRGSP)"/>
        </authorList>
    </citation>
    <scope>NUCLEOTIDE SEQUENCE [LARGE SCALE GENOMIC DNA]</scope>
    <source>
        <strain>cv. Nipponbare</strain>
    </source>
</reference>
<reference key="3">
    <citation type="journal article" date="2008" name="Nucleic Acids Res.">
        <title>The rice annotation project database (RAP-DB): 2008 update.</title>
        <authorList>
            <consortium name="The rice annotation project (RAP)"/>
        </authorList>
    </citation>
    <scope>GENOME REANNOTATION</scope>
    <source>
        <strain>cv. Nipponbare</strain>
    </source>
</reference>
<reference key="4">
    <citation type="journal article" date="2013" name="Rice">
        <title>Improvement of the Oryza sativa Nipponbare reference genome using next generation sequence and optical map data.</title>
        <authorList>
            <person name="Kawahara Y."/>
            <person name="de la Bastide M."/>
            <person name="Hamilton J.P."/>
            <person name="Kanamori H."/>
            <person name="McCombie W.R."/>
            <person name="Ouyang S."/>
            <person name="Schwartz D.C."/>
            <person name="Tanaka T."/>
            <person name="Wu J."/>
            <person name="Zhou S."/>
            <person name="Childs K.L."/>
            <person name="Davidson R.M."/>
            <person name="Lin H."/>
            <person name="Quesada-Ocampo L."/>
            <person name="Vaillancourt B."/>
            <person name="Sakai H."/>
            <person name="Lee S.S."/>
            <person name="Kim J."/>
            <person name="Numa H."/>
            <person name="Itoh T."/>
            <person name="Buell C.R."/>
            <person name="Matsumoto T."/>
        </authorList>
    </citation>
    <scope>GENOME REANNOTATION</scope>
    <source>
        <strain>cv. Nipponbare</strain>
    </source>
</reference>
<reference key="5">
    <citation type="journal article" date="2005" name="PLoS Biol.">
        <title>The genomes of Oryza sativa: a history of duplications.</title>
        <authorList>
            <person name="Yu J."/>
            <person name="Wang J."/>
            <person name="Lin W."/>
            <person name="Li S."/>
            <person name="Li H."/>
            <person name="Zhou J."/>
            <person name="Ni P."/>
            <person name="Dong W."/>
            <person name="Hu S."/>
            <person name="Zeng C."/>
            <person name="Zhang J."/>
            <person name="Zhang Y."/>
            <person name="Li R."/>
            <person name="Xu Z."/>
            <person name="Li S."/>
            <person name="Li X."/>
            <person name="Zheng H."/>
            <person name="Cong L."/>
            <person name="Lin L."/>
            <person name="Yin J."/>
            <person name="Geng J."/>
            <person name="Li G."/>
            <person name="Shi J."/>
            <person name="Liu J."/>
            <person name="Lv H."/>
            <person name="Li J."/>
            <person name="Wang J."/>
            <person name="Deng Y."/>
            <person name="Ran L."/>
            <person name="Shi X."/>
            <person name="Wang X."/>
            <person name="Wu Q."/>
            <person name="Li C."/>
            <person name="Ren X."/>
            <person name="Wang J."/>
            <person name="Wang X."/>
            <person name="Li D."/>
            <person name="Liu D."/>
            <person name="Zhang X."/>
            <person name="Ji Z."/>
            <person name="Zhao W."/>
            <person name="Sun Y."/>
            <person name="Zhang Z."/>
            <person name="Bao J."/>
            <person name="Han Y."/>
            <person name="Dong L."/>
            <person name="Ji J."/>
            <person name="Chen P."/>
            <person name="Wu S."/>
            <person name="Liu J."/>
            <person name="Xiao Y."/>
            <person name="Bu D."/>
            <person name="Tan J."/>
            <person name="Yang L."/>
            <person name="Ye C."/>
            <person name="Zhang J."/>
            <person name="Xu J."/>
            <person name="Zhou Y."/>
            <person name="Yu Y."/>
            <person name="Zhang B."/>
            <person name="Zhuang S."/>
            <person name="Wei H."/>
            <person name="Liu B."/>
            <person name="Lei M."/>
            <person name="Yu H."/>
            <person name="Li Y."/>
            <person name="Xu H."/>
            <person name="Wei S."/>
            <person name="He X."/>
            <person name="Fang L."/>
            <person name="Zhang Z."/>
            <person name="Zhang Y."/>
            <person name="Huang X."/>
            <person name="Su Z."/>
            <person name="Tong W."/>
            <person name="Li J."/>
            <person name="Tong Z."/>
            <person name="Li S."/>
            <person name="Ye J."/>
            <person name="Wang L."/>
            <person name="Fang L."/>
            <person name="Lei T."/>
            <person name="Chen C.-S."/>
            <person name="Chen H.-C."/>
            <person name="Xu Z."/>
            <person name="Li H."/>
            <person name="Huang H."/>
            <person name="Zhang F."/>
            <person name="Xu H."/>
            <person name="Li N."/>
            <person name="Zhao C."/>
            <person name="Li S."/>
            <person name="Dong L."/>
            <person name="Huang Y."/>
            <person name="Li L."/>
            <person name="Xi Y."/>
            <person name="Qi Q."/>
            <person name="Li W."/>
            <person name="Zhang B."/>
            <person name="Hu W."/>
            <person name="Zhang Y."/>
            <person name="Tian X."/>
            <person name="Jiao Y."/>
            <person name="Liang X."/>
            <person name="Jin J."/>
            <person name="Gao L."/>
            <person name="Zheng W."/>
            <person name="Hao B."/>
            <person name="Liu S.-M."/>
            <person name="Wang W."/>
            <person name="Yuan L."/>
            <person name="Cao M."/>
            <person name="McDermott J."/>
            <person name="Samudrala R."/>
            <person name="Wang J."/>
            <person name="Wong G.K.-S."/>
            <person name="Yang H."/>
        </authorList>
    </citation>
    <scope>NUCLEOTIDE SEQUENCE [LARGE SCALE GENOMIC DNA]</scope>
    <source>
        <strain>cv. Nipponbare</strain>
    </source>
</reference>
<reference key="6">
    <citation type="journal article" date="2003" name="Science">
        <title>Collection, mapping, and annotation of over 28,000 cDNA clones from japonica rice.</title>
        <authorList>
            <consortium name="The rice full-length cDNA consortium"/>
        </authorList>
    </citation>
    <scope>NUCLEOTIDE SEQUENCE [LARGE SCALE MRNA]</scope>
    <source>
        <strain>cv. Nipponbare</strain>
    </source>
</reference>
<reference key="7">
    <citation type="journal article" date="1998" name="Nature">
        <title>The biosynthetic pathway of vitamin C in higher plants.</title>
        <authorList>
            <person name="Wheeler G.L."/>
            <person name="Jones M.A."/>
            <person name="Smirnoff N."/>
        </authorList>
    </citation>
    <scope>PATHWAY</scope>
</reference>
<organism>
    <name type="scientific">Oryza sativa subsp. japonica</name>
    <name type="common">Rice</name>
    <dbReference type="NCBI Taxonomy" id="39947"/>
    <lineage>
        <taxon>Eukaryota</taxon>
        <taxon>Viridiplantae</taxon>
        <taxon>Streptophyta</taxon>
        <taxon>Embryophyta</taxon>
        <taxon>Tracheophyta</taxon>
        <taxon>Spermatophyta</taxon>
        <taxon>Magnoliopsida</taxon>
        <taxon>Liliopsida</taxon>
        <taxon>Poales</taxon>
        <taxon>Poaceae</taxon>
        <taxon>BOP clade</taxon>
        <taxon>Oryzoideae</taxon>
        <taxon>Oryzeae</taxon>
        <taxon>Oryzinae</taxon>
        <taxon>Oryza</taxon>
        <taxon>Oryza sativa</taxon>
    </lineage>
</organism>
<sequence length="371" mass="42132">MALNEEYTYVELEKEPYWPFEKLRISITGAGGFIASHIARRLKSEGHYIIASDWKKNEHMTEDMFCHEFHLVDLRVMDNCLKVTTGVDHVFNLAADMGGMGFIQSNHSVIMYNNTMISFNMLEAARINGVKRFFYASSACIYPEFKQLDTVVSLKESDAWPAEPQDAYGLEKLATEELCKHYTKDFGIECRVGRFHNIYGPFGTWKGGREKAPAAFCRKALTSTDRFEMWGDGLQTRSFTFIDECVEGVLRLTKSDFREPVNIGSDEMVSMNEMAEIVLSFENKQLPIHHIPGPEGVRGRNSDNTLIKEKLGWAPTMRLKDGLRITYFWIKEQLEKEKAEGVDLSAYGSSKVVQTQAPVQLGSLRAADGKE</sequence>
<name>GME2_ORYSJ</name>
<dbReference type="EC" id="5.1.3.18" evidence="2"/>
<dbReference type="EMBL" id="DP000010">
    <property type="protein sequence ID" value="ABA94522.1"/>
    <property type="molecule type" value="Genomic_DNA"/>
</dbReference>
<dbReference type="EMBL" id="DP000010">
    <property type="protein sequence ID" value="ABA94523.1"/>
    <property type="status" value="ALT_SEQ"/>
    <property type="molecule type" value="Genomic_DNA"/>
</dbReference>
<dbReference type="EMBL" id="DP000010">
    <property type="protein sequence ID" value="ABA94524.1"/>
    <property type="status" value="ALT_SEQ"/>
    <property type="molecule type" value="Genomic_DNA"/>
</dbReference>
<dbReference type="EMBL" id="AP008217">
    <property type="protein sequence ID" value="BAF28546.1"/>
    <property type="molecule type" value="Genomic_DNA"/>
</dbReference>
<dbReference type="EMBL" id="AP014967">
    <property type="protein sequence ID" value="BAT14673.1"/>
    <property type="molecule type" value="Genomic_DNA"/>
</dbReference>
<dbReference type="EMBL" id="CM000148">
    <property type="protein sequence ID" value="EAZ18955.1"/>
    <property type="molecule type" value="Genomic_DNA"/>
</dbReference>
<dbReference type="EMBL" id="AK102348">
    <property type="status" value="NOT_ANNOTATED_CDS"/>
    <property type="molecule type" value="mRNA"/>
</dbReference>
<dbReference type="RefSeq" id="XP_015617577.1">
    <property type="nucleotide sequence ID" value="XM_015762091.1"/>
</dbReference>
<dbReference type="SMR" id="Q2R1V8"/>
<dbReference type="FunCoup" id="Q2R1V8">
    <property type="interactions" value="734"/>
</dbReference>
<dbReference type="STRING" id="39947.Q2R1V8"/>
<dbReference type="PaxDb" id="39947-Q2R1V8"/>
<dbReference type="EnsemblPlants" id="Os11t0591100-01">
    <property type="protein sequence ID" value="Os11t0591100-01"/>
    <property type="gene ID" value="Os11g0591100"/>
</dbReference>
<dbReference type="Gramene" id="Os11t0591100-01">
    <property type="protein sequence ID" value="Os11t0591100-01"/>
    <property type="gene ID" value="Os11g0591100"/>
</dbReference>
<dbReference type="KEGG" id="dosa:Os11g0591100"/>
<dbReference type="eggNOG" id="KOG1429">
    <property type="taxonomic scope" value="Eukaryota"/>
</dbReference>
<dbReference type="HOGENOM" id="CLU_007383_4_2_1"/>
<dbReference type="InParanoid" id="Q2R1V8"/>
<dbReference type="OMA" id="RSFMYID"/>
<dbReference type="OrthoDB" id="331544at2759"/>
<dbReference type="UniPathway" id="UPA00990">
    <property type="reaction ID" value="UER00931"/>
</dbReference>
<dbReference type="Proteomes" id="UP000000763">
    <property type="component" value="Chromosome 11"/>
</dbReference>
<dbReference type="Proteomes" id="UP000007752">
    <property type="component" value="Chromosome 11"/>
</dbReference>
<dbReference type="Proteomes" id="UP000059680">
    <property type="component" value="Chromosome 11"/>
</dbReference>
<dbReference type="GO" id="GO:0047918">
    <property type="term" value="F:GDP-mannose 3,5-epimerase activity"/>
    <property type="evidence" value="ECO:0007669"/>
    <property type="project" value="UniProtKB-EC"/>
</dbReference>
<dbReference type="GO" id="GO:0051287">
    <property type="term" value="F:NAD binding"/>
    <property type="evidence" value="ECO:0007669"/>
    <property type="project" value="InterPro"/>
</dbReference>
<dbReference type="GO" id="GO:0019853">
    <property type="term" value="P:L-ascorbic acid biosynthetic process"/>
    <property type="evidence" value="ECO:0007669"/>
    <property type="project" value="UniProtKB-KW"/>
</dbReference>
<dbReference type="CDD" id="cd05273">
    <property type="entry name" value="GME-like_SDR_e"/>
    <property type="match status" value="1"/>
</dbReference>
<dbReference type="Gene3D" id="3.40.50.720">
    <property type="entry name" value="NAD(P)-binding Rossmann-like Domain"/>
    <property type="match status" value="1"/>
</dbReference>
<dbReference type="Gene3D" id="3.90.25.10">
    <property type="entry name" value="UDP-galactose 4-epimerase, domain 1"/>
    <property type="match status" value="1"/>
</dbReference>
<dbReference type="InterPro" id="IPR001509">
    <property type="entry name" value="Epimerase_deHydtase"/>
</dbReference>
<dbReference type="InterPro" id="IPR033890">
    <property type="entry name" value="GDP-Man_epi"/>
</dbReference>
<dbReference type="InterPro" id="IPR036291">
    <property type="entry name" value="NAD(P)-bd_dom_sf"/>
</dbReference>
<dbReference type="PANTHER" id="PTHR43574">
    <property type="entry name" value="EPIMERASE-RELATED"/>
    <property type="match status" value="1"/>
</dbReference>
<dbReference type="Pfam" id="PF01370">
    <property type="entry name" value="Epimerase"/>
    <property type="match status" value="1"/>
</dbReference>
<dbReference type="SUPFAM" id="SSF51735">
    <property type="entry name" value="NAD(P)-binding Rossmann-fold domains"/>
    <property type="match status" value="1"/>
</dbReference>
<accession>Q2R1V8</accession>
<accession>A0A0P0Y3W9</accession>
<accession>Q0IRW9</accession>
<accession>Q2R1V9</accession>
<accession>Q2R1W0</accession>